<accession>Q8S8W2</accession>
<organism>
    <name type="scientific">Atropa belladonna</name>
    <name type="common">Belladonna</name>
    <name type="synonym">Deadly nightshade</name>
    <dbReference type="NCBI Taxonomy" id="33113"/>
    <lineage>
        <taxon>Eukaryota</taxon>
        <taxon>Viridiplantae</taxon>
        <taxon>Streptophyta</taxon>
        <taxon>Embryophyta</taxon>
        <taxon>Tracheophyta</taxon>
        <taxon>Spermatophyta</taxon>
        <taxon>Magnoliopsida</taxon>
        <taxon>eudicotyledons</taxon>
        <taxon>Gunneridae</taxon>
        <taxon>Pentapetalae</taxon>
        <taxon>asterids</taxon>
        <taxon>lamiids</taxon>
        <taxon>Solanales</taxon>
        <taxon>Solanaceae</taxon>
        <taxon>Solanoideae</taxon>
        <taxon>Hyoscyameae</taxon>
        <taxon>Atropa</taxon>
    </lineage>
</organism>
<keyword id="KW-0150">Chloroplast</keyword>
<keyword id="KW-0378">Hydrolase</keyword>
<keyword id="KW-0934">Plastid</keyword>
<keyword id="KW-0645">Protease</keyword>
<keyword id="KW-0720">Serine protease</keyword>
<name>CLPP_ATRBE</name>
<geneLocation type="chloroplast"/>
<reference key="1">
    <citation type="journal article" date="2002" name="Mol. Biol. Evol.">
        <title>The plastid chromosome of Atropa belladonna and its comparison with that of Nicotiana tabacum: the role of RNA editing in generating divergence in the process of plant speciation.</title>
        <authorList>
            <person name="Schmitz-Linneweber C."/>
            <person name="Regel R."/>
            <person name="Du T.G."/>
            <person name="Hupfer H."/>
            <person name="Herrmann R.G."/>
            <person name="Maier R.M."/>
        </authorList>
    </citation>
    <scope>NUCLEOTIDE SEQUENCE [LARGE SCALE GENOMIC DNA]</scope>
    <source>
        <strain>cv. Ab5p(kan)</strain>
    </source>
</reference>
<sequence length="196" mass="22013">MPIGVPKVPFRSPGEEDASWVDVYNRLYRERLLFLGQGINSEISNQLIGLMVYLSIEDETKELYLFINSPGGWVIPGIAIYDTMQFVRPDVHTVCMGLAASMGSFILVGGEITKRLAFPHARVMMHQPASGYYEAQTGEFVLEAEELLKLRETLTRVYVQRTGKPLWVVSEDMEKDVFMSATEAQAYGIVDLVAVE</sequence>
<dbReference type="EC" id="3.4.21.92" evidence="1"/>
<dbReference type="EMBL" id="AJ316582">
    <property type="protein sequence ID" value="CAC88069.1"/>
    <property type="molecule type" value="Genomic_DNA"/>
</dbReference>
<dbReference type="RefSeq" id="NP_783256.1">
    <property type="nucleotide sequence ID" value="NC_004561.1"/>
</dbReference>
<dbReference type="SMR" id="Q8S8W2"/>
<dbReference type="MEROPS" id="S14.002"/>
<dbReference type="GeneID" id="806550"/>
<dbReference type="GO" id="GO:0009570">
    <property type="term" value="C:chloroplast stroma"/>
    <property type="evidence" value="ECO:0007669"/>
    <property type="project" value="UniProtKB-SubCell"/>
</dbReference>
<dbReference type="GO" id="GO:0009368">
    <property type="term" value="C:endopeptidase Clp complex"/>
    <property type="evidence" value="ECO:0007669"/>
    <property type="project" value="TreeGrafter"/>
</dbReference>
<dbReference type="GO" id="GO:0004176">
    <property type="term" value="F:ATP-dependent peptidase activity"/>
    <property type="evidence" value="ECO:0007669"/>
    <property type="project" value="InterPro"/>
</dbReference>
<dbReference type="GO" id="GO:0051117">
    <property type="term" value="F:ATPase binding"/>
    <property type="evidence" value="ECO:0007669"/>
    <property type="project" value="TreeGrafter"/>
</dbReference>
<dbReference type="GO" id="GO:0004252">
    <property type="term" value="F:serine-type endopeptidase activity"/>
    <property type="evidence" value="ECO:0007669"/>
    <property type="project" value="UniProtKB-UniRule"/>
</dbReference>
<dbReference type="GO" id="GO:0006515">
    <property type="term" value="P:protein quality control for misfolded or incompletely synthesized proteins"/>
    <property type="evidence" value="ECO:0007669"/>
    <property type="project" value="TreeGrafter"/>
</dbReference>
<dbReference type="CDD" id="cd07017">
    <property type="entry name" value="S14_ClpP_2"/>
    <property type="match status" value="1"/>
</dbReference>
<dbReference type="FunFam" id="3.90.226.10:FF:000006">
    <property type="entry name" value="ATP-dependent Clp protease proteolytic subunit"/>
    <property type="match status" value="1"/>
</dbReference>
<dbReference type="Gene3D" id="3.90.226.10">
    <property type="entry name" value="2-enoyl-CoA Hydratase, Chain A, domain 1"/>
    <property type="match status" value="1"/>
</dbReference>
<dbReference type="HAMAP" id="MF_00444">
    <property type="entry name" value="ClpP"/>
    <property type="match status" value="1"/>
</dbReference>
<dbReference type="InterPro" id="IPR001907">
    <property type="entry name" value="ClpP"/>
</dbReference>
<dbReference type="InterPro" id="IPR029045">
    <property type="entry name" value="ClpP/crotonase-like_dom_sf"/>
</dbReference>
<dbReference type="InterPro" id="IPR023562">
    <property type="entry name" value="ClpP/TepA"/>
</dbReference>
<dbReference type="InterPro" id="IPR033135">
    <property type="entry name" value="ClpP_His_AS"/>
</dbReference>
<dbReference type="InterPro" id="IPR018215">
    <property type="entry name" value="ClpP_Ser_AS"/>
</dbReference>
<dbReference type="PANTHER" id="PTHR10381">
    <property type="entry name" value="ATP-DEPENDENT CLP PROTEASE PROTEOLYTIC SUBUNIT"/>
    <property type="match status" value="1"/>
</dbReference>
<dbReference type="PANTHER" id="PTHR10381:SF15">
    <property type="entry name" value="CHLOROPLASTIC ATP-DEPENDENT CLP PROTEASE PROTEOLYTIC SUBUNIT 1"/>
    <property type="match status" value="1"/>
</dbReference>
<dbReference type="Pfam" id="PF00574">
    <property type="entry name" value="CLP_protease"/>
    <property type="match status" value="1"/>
</dbReference>
<dbReference type="PRINTS" id="PR00127">
    <property type="entry name" value="CLPPROTEASEP"/>
</dbReference>
<dbReference type="SUPFAM" id="SSF52096">
    <property type="entry name" value="ClpP/crotonase"/>
    <property type="match status" value="1"/>
</dbReference>
<dbReference type="PROSITE" id="PS00382">
    <property type="entry name" value="CLP_PROTEASE_HIS"/>
    <property type="match status" value="1"/>
</dbReference>
<dbReference type="PROSITE" id="PS00381">
    <property type="entry name" value="CLP_PROTEASE_SER"/>
    <property type="match status" value="1"/>
</dbReference>
<comment type="function">
    <text evidence="1">Cleaves peptides in various proteins in a process that requires ATP hydrolysis. Has a chymotrypsin-like activity. Plays a major role in the degradation of misfolded proteins.</text>
</comment>
<comment type="catalytic activity">
    <reaction evidence="1">
        <text>Hydrolysis of proteins to small peptides in the presence of ATP and magnesium. alpha-casein is the usual test substrate. In the absence of ATP, only oligopeptides shorter than five residues are hydrolyzed (such as succinyl-Leu-Tyr-|-NHMec, and Leu-Tyr-Leu-|-Tyr-Trp, in which cleavage of the -Tyr-|-Leu- and -Tyr-|-Trp bonds also occurs).</text>
        <dbReference type="EC" id="3.4.21.92"/>
    </reaction>
</comment>
<comment type="subunit">
    <text>Component of the chloroplastic Clp protease core complex.</text>
</comment>
<comment type="subcellular location">
    <subcellularLocation>
        <location evidence="1">Plastid</location>
        <location evidence="1">Chloroplast stroma</location>
    </subcellularLocation>
</comment>
<comment type="similarity">
    <text evidence="1">Belongs to the peptidase S14 family.</text>
</comment>
<evidence type="ECO:0000255" key="1">
    <source>
        <dbReference type="HAMAP-Rule" id="MF_00444"/>
    </source>
</evidence>
<protein>
    <recommendedName>
        <fullName evidence="1">ATP-dependent Clp protease proteolytic subunit</fullName>
        <ecNumber evidence="1">3.4.21.92</ecNumber>
    </recommendedName>
    <alternativeName>
        <fullName evidence="1">Endopeptidase Clp</fullName>
    </alternativeName>
</protein>
<proteinExistence type="inferred from homology"/>
<gene>
    <name evidence="1" type="primary">clpP</name>
</gene>
<feature type="chain" id="PRO_0000275277" description="ATP-dependent Clp protease proteolytic subunit">
    <location>
        <begin position="1"/>
        <end position="196"/>
    </location>
</feature>
<feature type="active site" description="Nucleophile" evidence="1">
    <location>
        <position position="101"/>
    </location>
</feature>
<feature type="active site" evidence="1">
    <location>
        <position position="126"/>
    </location>
</feature>